<feature type="chain" id="PRO_0000212142" description="2,3-bisphosphoglycerate-independent phosphoglycerate mutase">
    <location>
        <begin position="1"/>
        <end position="501"/>
    </location>
</feature>
<feature type="active site" description="Phosphoserine intermediate" evidence="1">
    <location>
        <position position="62"/>
    </location>
</feature>
<feature type="binding site" evidence="1">
    <location>
        <position position="12"/>
    </location>
    <ligand>
        <name>Mn(2+)</name>
        <dbReference type="ChEBI" id="CHEBI:29035"/>
        <label>2</label>
    </ligand>
</feature>
<feature type="binding site" evidence="1">
    <location>
        <position position="62"/>
    </location>
    <ligand>
        <name>Mn(2+)</name>
        <dbReference type="ChEBI" id="CHEBI:29035"/>
        <label>2</label>
    </ligand>
</feature>
<feature type="binding site" evidence="1">
    <location>
        <position position="121"/>
    </location>
    <ligand>
        <name>substrate</name>
    </ligand>
</feature>
<feature type="binding site" evidence="1">
    <location>
        <begin position="150"/>
        <end position="151"/>
    </location>
    <ligand>
        <name>substrate</name>
    </ligand>
</feature>
<feature type="binding site" evidence="1">
    <location>
        <position position="182"/>
    </location>
    <ligand>
        <name>substrate</name>
    </ligand>
</feature>
<feature type="binding site" evidence="1">
    <location>
        <position position="188"/>
    </location>
    <ligand>
        <name>substrate</name>
    </ligand>
</feature>
<feature type="binding site" evidence="1">
    <location>
        <begin position="253"/>
        <end position="256"/>
    </location>
    <ligand>
        <name>substrate</name>
    </ligand>
</feature>
<feature type="binding site" evidence="1">
    <location>
        <position position="323"/>
    </location>
    <ligand>
        <name>substrate</name>
    </ligand>
</feature>
<feature type="binding site" evidence="1">
    <location>
        <position position="390"/>
    </location>
    <ligand>
        <name>Mn(2+)</name>
        <dbReference type="ChEBI" id="CHEBI:29035"/>
        <label>1</label>
    </ligand>
</feature>
<feature type="binding site" evidence="1">
    <location>
        <position position="394"/>
    </location>
    <ligand>
        <name>Mn(2+)</name>
        <dbReference type="ChEBI" id="CHEBI:29035"/>
        <label>1</label>
    </ligand>
</feature>
<feature type="binding site" evidence="1">
    <location>
        <position position="431"/>
    </location>
    <ligand>
        <name>Mn(2+)</name>
        <dbReference type="ChEBI" id="CHEBI:29035"/>
        <label>2</label>
    </ligand>
</feature>
<feature type="binding site" evidence="1">
    <location>
        <position position="432"/>
    </location>
    <ligand>
        <name>Mn(2+)</name>
        <dbReference type="ChEBI" id="CHEBI:29035"/>
        <label>2</label>
    </ligand>
</feature>
<feature type="binding site" evidence="1">
    <location>
        <position position="450"/>
    </location>
    <ligand>
        <name>Mn(2+)</name>
        <dbReference type="ChEBI" id="CHEBI:29035"/>
        <label>1</label>
    </ligand>
</feature>
<sequence>MTNHSVILCILDGWGNGENNQFNAIAQAYKPCWDNITLQYPKSHLITHGSSVGLPDGQIGNSEVGHVNLGSGRIVLQDLCKINNEIKYIKDNVYLLEFINKIKKNNGICHIAGLLSDGGVHSSYTHILDIINTLSDFQIQVAVHIFLDGRDTPPISATKYISILCEHIKHLNNINIATLSGRYYAMDRDNRLDRTTKAYNAIAFANAKRYEDPLTAVQDSYNLGITDEFILPCIIGNYQGMKPQDGFIMTNFRSDRVIQIIKMIIGDIKTDNHITLDNTIGMVKYSDKINIPCLFPNNNITNTLGEVIANNQLHQLRIAETEKYAHVTFFFNGGKEDMFENEDRIIIPSPSVATYNLTPEMSAEKVTDTIIEKIKLQKYSLIIVNYANADMVGHTGNIDATKQAITTIDQCLSKILNCIQNTNYVLVITSDHGNAEEMFDVKNNMPYTAHTLNPVPFIICNYNKKIRLKNGRLCDVAPTILEILNLAKPKEMTGVSLIEQV</sequence>
<keyword id="KW-0324">Glycolysis</keyword>
<keyword id="KW-0413">Isomerase</keyword>
<keyword id="KW-0464">Manganese</keyword>
<keyword id="KW-0479">Metal-binding</keyword>
<gene>
    <name evidence="1" type="primary">gpmI</name>
    <name type="ordered locus">Ecaj_0523</name>
</gene>
<reference key="1">
    <citation type="journal article" date="2006" name="J. Bacteriol.">
        <title>The genome of the obligately intracellular bacterium Ehrlichia canis reveals themes of complex membrane structure and immune evasion strategies.</title>
        <authorList>
            <person name="Mavromatis K."/>
            <person name="Doyle C.K."/>
            <person name="Lykidis A."/>
            <person name="Ivanova N."/>
            <person name="Francino M.P."/>
            <person name="Chain P."/>
            <person name="Shin M."/>
            <person name="Malfatti S."/>
            <person name="Larimer F."/>
            <person name="Copeland A."/>
            <person name="Detter J.C."/>
            <person name="Land M."/>
            <person name="Richardson P.M."/>
            <person name="Yu X.J."/>
            <person name="Walker D.H."/>
            <person name="McBride J.W."/>
            <person name="Kyrpides N.C."/>
        </authorList>
    </citation>
    <scope>NUCLEOTIDE SEQUENCE [LARGE SCALE GENOMIC DNA]</scope>
    <source>
        <strain>Jake</strain>
    </source>
</reference>
<accession>Q3YRU6</accession>
<evidence type="ECO:0000255" key="1">
    <source>
        <dbReference type="HAMAP-Rule" id="MF_01038"/>
    </source>
</evidence>
<name>GPMI_EHRCJ</name>
<dbReference type="EC" id="5.4.2.12" evidence="1"/>
<dbReference type="EMBL" id="CP000107">
    <property type="protein sequence ID" value="AAZ68559.1"/>
    <property type="molecule type" value="Genomic_DNA"/>
</dbReference>
<dbReference type="RefSeq" id="WP_011304637.1">
    <property type="nucleotide sequence ID" value="NC_007354.1"/>
</dbReference>
<dbReference type="SMR" id="Q3YRU6"/>
<dbReference type="FunCoup" id="Q3YRU6">
    <property type="interactions" value="249"/>
</dbReference>
<dbReference type="STRING" id="269484.Ecaj_0523"/>
<dbReference type="KEGG" id="ecn:Ecaj_0523"/>
<dbReference type="eggNOG" id="COG0696">
    <property type="taxonomic scope" value="Bacteria"/>
</dbReference>
<dbReference type="HOGENOM" id="CLU_026099_2_0_5"/>
<dbReference type="InParanoid" id="Q3YRU6"/>
<dbReference type="UniPathway" id="UPA00109">
    <property type="reaction ID" value="UER00186"/>
</dbReference>
<dbReference type="Proteomes" id="UP000000435">
    <property type="component" value="Chromosome"/>
</dbReference>
<dbReference type="GO" id="GO:0005829">
    <property type="term" value="C:cytosol"/>
    <property type="evidence" value="ECO:0007669"/>
    <property type="project" value="TreeGrafter"/>
</dbReference>
<dbReference type="GO" id="GO:0030145">
    <property type="term" value="F:manganese ion binding"/>
    <property type="evidence" value="ECO:0007669"/>
    <property type="project" value="UniProtKB-UniRule"/>
</dbReference>
<dbReference type="GO" id="GO:0004619">
    <property type="term" value="F:phosphoglycerate mutase activity"/>
    <property type="evidence" value="ECO:0007669"/>
    <property type="project" value="UniProtKB-EC"/>
</dbReference>
<dbReference type="GO" id="GO:0006007">
    <property type="term" value="P:glucose catabolic process"/>
    <property type="evidence" value="ECO:0007669"/>
    <property type="project" value="InterPro"/>
</dbReference>
<dbReference type="GO" id="GO:0006096">
    <property type="term" value="P:glycolytic process"/>
    <property type="evidence" value="ECO:0007669"/>
    <property type="project" value="UniProtKB-UniRule"/>
</dbReference>
<dbReference type="CDD" id="cd16010">
    <property type="entry name" value="iPGM"/>
    <property type="match status" value="1"/>
</dbReference>
<dbReference type="FunFam" id="3.40.1450.10:FF:000002">
    <property type="entry name" value="2,3-bisphosphoglycerate-independent phosphoglycerate mutase"/>
    <property type="match status" value="1"/>
</dbReference>
<dbReference type="Gene3D" id="3.40.720.10">
    <property type="entry name" value="Alkaline Phosphatase, subunit A"/>
    <property type="match status" value="1"/>
</dbReference>
<dbReference type="Gene3D" id="3.40.1450.10">
    <property type="entry name" value="BPG-independent phosphoglycerate mutase, domain B"/>
    <property type="match status" value="1"/>
</dbReference>
<dbReference type="HAMAP" id="MF_01038">
    <property type="entry name" value="GpmI"/>
    <property type="match status" value="1"/>
</dbReference>
<dbReference type="InterPro" id="IPR017850">
    <property type="entry name" value="Alkaline_phosphatase_core_sf"/>
</dbReference>
<dbReference type="InterPro" id="IPR011258">
    <property type="entry name" value="BPG-indep_PGM_N"/>
</dbReference>
<dbReference type="InterPro" id="IPR006124">
    <property type="entry name" value="Metalloenzyme"/>
</dbReference>
<dbReference type="InterPro" id="IPR036646">
    <property type="entry name" value="PGAM_B_sf"/>
</dbReference>
<dbReference type="InterPro" id="IPR005995">
    <property type="entry name" value="Pgm_bpd_ind"/>
</dbReference>
<dbReference type="NCBIfam" id="TIGR01307">
    <property type="entry name" value="pgm_bpd_ind"/>
    <property type="match status" value="1"/>
</dbReference>
<dbReference type="PANTHER" id="PTHR31637">
    <property type="entry name" value="2,3-BISPHOSPHOGLYCERATE-INDEPENDENT PHOSPHOGLYCERATE MUTASE"/>
    <property type="match status" value="1"/>
</dbReference>
<dbReference type="PANTHER" id="PTHR31637:SF0">
    <property type="entry name" value="2,3-BISPHOSPHOGLYCERATE-INDEPENDENT PHOSPHOGLYCERATE MUTASE"/>
    <property type="match status" value="1"/>
</dbReference>
<dbReference type="Pfam" id="PF06415">
    <property type="entry name" value="iPGM_N"/>
    <property type="match status" value="1"/>
</dbReference>
<dbReference type="Pfam" id="PF01676">
    <property type="entry name" value="Metalloenzyme"/>
    <property type="match status" value="1"/>
</dbReference>
<dbReference type="PIRSF" id="PIRSF001492">
    <property type="entry name" value="IPGAM"/>
    <property type="match status" value="1"/>
</dbReference>
<dbReference type="SUPFAM" id="SSF64158">
    <property type="entry name" value="2,3-Bisphosphoglycerate-independent phosphoglycerate mutase, substrate-binding domain"/>
    <property type="match status" value="1"/>
</dbReference>
<dbReference type="SUPFAM" id="SSF53649">
    <property type="entry name" value="Alkaline phosphatase-like"/>
    <property type="match status" value="1"/>
</dbReference>
<comment type="function">
    <text evidence="1">Catalyzes the interconversion of 2-phosphoglycerate and 3-phosphoglycerate.</text>
</comment>
<comment type="catalytic activity">
    <reaction evidence="1">
        <text>(2R)-2-phosphoglycerate = (2R)-3-phosphoglycerate</text>
        <dbReference type="Rhea" id="RHEA:15901"/>
        <dbReference type="ChEBI" id="CHEBI:58272"/>
        <dbReference type="ChEBI" id="CHEBI:58289"/>
        <dbReference type="EC" id="5.4.2.12"/>
    </reaction>
</comment>
<comment type="cofactor">
    <cofactor evidence="1">
        <name>Mn(2+)</name>
        <dbReference type="ChEBI" id="CHEBI:29035"/>
    </cofactor>
    <text evidence="1">Binds 2 manganese ions per subunit.</text>
</comment>
<comment type="pathway">
    <text evidence="1">Carbohydrate degradation; glycolysis; pyruvate from D-glyceraldehyde 3-phosphate: step 3/5.</text>
</comment>
<comment type="subunit">
    <text evidence="1">Monomer.</text>
</comment>
<comment type="similarity">
    <text evidence="1">Belongs to the BPG-independent phosphoglycerate mutase family.</text>
</comment>
<proteinExistence type="inferred from homology"/>
<organism>
    <name type="scientific">Ehrlichia canis (strain Jake)</name>
    <dbReference type="NCBI Taxonomy" id="269484"/>
    <lineage>
        <taxon>Bacteria</taxon>
        <taxon>Pseudomonadati</taxon>
        <taxon>Pseudomonadota</taxon>
        <taxon>Alphaproteobacteria</taxon>
        <taxon>Rickettsiales</taxon>
        <taxon>Anaplasmataceae</taxon>
        <taxon>Ehrlichia</taxon>
    </lineage>
</organism>
<protein>
    <recommendedName>
        <fullName evidence="1">2,3-bisphosphoglycerate-independent phosphoglycerate mutase</fullName>
        <shortName evidence="1">BPG-independent PGAM</shortName>
        <shortName evidence="1">Phosphoglyceromutase</shortName>
        <shortName evidence="1">iPGM</shortName>
        <ecNumber evidence="1">5.4.2.12</ecNumber>
    </recommendedName>
</protein>